<name>NFSS_NEOFI</name>
<sequence length="764" mass="87565">MEVWEHSRPIADDTIKKTPSFTTLPIRINKQNDVADAATRRALRDWDYYLHDGLAERALISISELGNLGAFAYPEVPPERLAIVTYLTDLGILHDDGYEAMDMDQARTEHREFGALFDPHEQLPSRRGTRAAKLKKLVSQILLEAIRIDRDMGMYMFDMYNKGWLSVAGGEGKVPQFKSVEEYQAYRRDDFGIRAFWPMVEFGMAMRLSDEDKKLIEPVMEPIDKAIIWTNDYWSFDREYHESITNGSRLTNVVEVVRQIENKSIDEAKAAVRQLLVNLEQQYLERKRAIYAQNPSIPSHLRKWIEVVGITVAGTHFWASCSPRHHAWRNNSRNGLKPANHVAAPTLITPSNNLNSSKGSEEQMQDSDNGTRTQMCPANDHEVMQLNAKLSLGKQDGGHAMRAALALLSRAAEQCESLFDGMEHERARLLQSGEEKARLSWEGRSKGSQELEHSWYKPAKTALQAPIHYICSMPSKGVRSRMIEAFNYWLEVDETSLTKIRRLVDLLHNASLILDDIEDHSPKRRGRPATHTIFGHSQAINSANFMFVQAVQVARQFRNPNAVDILLEELENLYLGQSWDLDWKYKLRCPSPSEYLNMVDNKTGGLFRLLLRLMQAERKGTTEVDLDGLTVLFGRFFQIRDDYMNLRSGLYTEQKGFCEDLDEGKFSYPIVVCVANHADFRDLIDGVFRQRPTAITSGMQPLAPEIKRYVVEYLNTSGTFQHCREFLMQLESLIESEIDRIEKVTNEANPMLRLLLEKLSVKEN</sequence>
<feature type="chain" id="PRO_0000453639" description="Sesterfisherol synthase">
    <location>
        <begin position="1"/>
        <end position="764"/>
    </location>
</feature>
<feature type="region of interest" description="Terpene cyclase" evidence="10">
    <location>
        <begin position="2"/>
        <end position="331"/>
    </location>
</feature>
<feature type="region of interest" description="Prenyltransferase" evidence="10">
    <location>
        <begin position="332"/>
        <end position="759"/>
    </location>
</feature>
<feature type="region of interest" description="Disordered" evidence="5">
    <location>
        <begin position="347"/>
        <end position="372"/>
    </location>
</feature>
<feature type="short sequence motif" description="DDXXD 1" evidence="10">
    <location>
        <begin position="95"/>
        <end position="99"/>
    </location>
</feature>
<feature type="short sequence motif" description="NSE/DTE" evidence="10">
    <location>
        <begin position="231"/>
        <end position="239"/>
    </location>
</feature>
<feature type="short sequence motif" description="DDXXD 2" evidence="10">
    <location>
        <begin position="515"/>
        <end position="519"/>
    </location>
</feature>
<feature type="compositionally biased region" description="Polar residues" evidence="5">
    <location>
        <begin position="348"/>
        <end position="358"/>
    </location>
</feature>
<feature type="binding site" evidence="4">
    <location>
        <position position="95"/>
    </location>
    <ligand>
        <name>Mg(2+)</name>
        <dbReference type="ChEBI" id="CHEBI:18420"/>
        <label>1</label>
    </ligand>
</feature>
<feature type="binding site" evidence="4">
    <location>
        <position position="95"/>
    </location>
    <ligand>
        <name>Mg(2+)</name>
        <dbReference type="ChEBI" id="CHEBI:18420"/>
        <label>2</label>
    </ligand>
</feature>
<feature type="binding site" evidence="1">
    <location>
        <position position="95"/>
    </location>
    <ligand>
        <name>substrate</name>
    </ligand>
</feature>
<feature type="binding site" evidence="1">
    <location>
        <begin position="187"/>
        <end position="190"/>
    </location>
    <ligand>
        <name>substrate</name>
    </ligand>
</feature>
<feature type="binding site" evidence="1">
    <location>
        <position position="231"/>
    </location>
    <ligand>
        <name>substrate</name>
    </ligand>
</feature>
<feature type="binding site" evidence="1">
    <location>
        <begin position="235"/>
        <end position="239"/>
    </location>
    <ligand>
        <name>substrate</name>
    </ligand>
</feature>
<feature type="binding site" evidence="1">
    <location>
        <begin position="324"/>
        <end position="325"/>
    </location>
    <ligand>
        <name>substrate</name>
    </ligand>
</feature>
<feature type="binding site" evidence="3">
    <location>
        <position position="476"/>
    </location>
    <ligand>
        <name>isopentenyl diphosphate</name>
        <dbReference type="ChEBI" id="CHEBI:128769"/>
    </ligand>
</feature>
<feature type="binding site" evidence="3">
    <location>
        <position position="479"/>
    </location>
    <ligand>
        <name>isopentenyl diphosphate</name>
        <dbReference type="ChEBI" id="CHEBI:128769"/>
    </ligand>
</feature>
<feature type="binding site" evidence="3">
    <location>
        <position position="508"/>
    </location>
    <ligand>
        <name>isopentenyl diphosphate</name>
        <dbReference type="ChEBI" id="CHEBI:128769"/>
    </ligand>
</feature>
<feature type="binding site" evidence="3">
    <location>
        <position position="515"/>
    </location>
    <ligand>
        <name>Mg(2+)</name>
        <dbReference type="ChEBI" id="CHEBI:18420"/>
        <label>3</label>
    </ligand>
</feature>
<feature type="binding site" evidence="3">
    <location>
        <position position="515"/>
    </location>
    <ligand>
        <name>Mg(2+)</name>
        <dbReference type="ChEBI" id="CHEBI:18420"/>
        <label>4</label>
    </ligand>
</feature>
<feature type="binding site" evidence="3">
    <location>
        <position position="519"/>
    </location>
    <ligand>
        <name>Mg(2+)</name>
        <dbReference type="ChEBI" id="CHEBI:18420"/>
        <label>3</label>
    </ligand>
</feature>
<feature type="binding site" evidence="3">
    <location>
        <position position="519"/>
    </location>
    <ligand>
        <name>Mg(2+)</name>
        <dbReference type="ChEBI" id="CHEBI:18420"/>
        <label>4</label>
    </ligand>
</feature>
<feature type="binding site" evidence="3">
    <location>
        <position position="524"/>
    </location>
    <ligand>
        <name>dimethylallyl diphosphate</name>
        <dbReference type="ChEBI" id="CHEBI:57623"/>
    </ligand>
</feature>
<feature type="binding site" evidence="3">
    <location>
        <position position="525"/>
    </location>
    <ligand>
        <name>isopentenyl diphosphate</name>
        <dbReference type="ChEBI" id="CHEBI:128769"/>
    </ligand>
</feature>
<feature type="binding site" evidence="3">
    <location>
        <position position="602"/>
    </location>
    <ligand>
        <name>dimethylallyl diphosphate</name>
        <dbReference type="ChEBI" id="CHEBI:57623"/>
    </ligand>
</feature>
<feature type="binding site" evidence="3">
    <location>
        <position position="603"/>
    </location>
    <ligand>
        <name>dimethylallyl diphosphate</name>
        <dbReference type="ChEBI" id="CHEBI:57623"/>
    </ligand>
</feature>
<feature type="binding site" evidence="3">
    <location>
        <position position="638"/>
    </location>
    <ligand>
        <name>dimethylallyl diphosphate</name>
        <dbReference type="ChEBI" id="CHEBI:57623"/>
    </ligand>
</feature>
<feature type="binding site" evidence="3">
    <location>
        <position position="645"/>
    </location>
    <ligand>
        <name>dimethylallyl diphosphate</name>
        <dbReference type="ChEBI" id="CHEBI:57623"/>
    </ligand>
</feature>
<feature type="binding site" evidence="3">
    <location>
        <position position="655"/>
    </location>
    <ligand>
        <name>dimethylallyl diphosphate</name>
        <dbReference type="ChEBI" id="CHEBI:57623"/>
    </ligand>
</feature>
<feature type="binding site" evidence="3">
    <location>
        <position position="665"/>
    </location>
    <ligand>
        <name>dimethylallyl diphosphate</name>
        <dbReference type="ChEBI" id="CHEBI:57623"/>
    </ligand>
</feature>
<feature type="mutagenesis site" description="Produces novel sesterterpenes, but not sesterfisherol." evidence="7">
    <original>F</original>
    <variation>A</variation>
    <location>
        <position position="191"/>
    </location>
</feature>
<feature type="strand" evidence="11">
    <location>
        <begin position="5"/>
        <end position="9"/>
    </location>
</feature>
<feature type="helix" evidence="11">
    <location>
        <begin position="12"/>
        <end position="16"/>
    </location>
</feature>
<feature type="strand" evidence="11">
    <location>
        <begin position="27"/>
        <end position="30"/>
    </location>
</feature>
<feature type="helix" evidence="11">
    <location>
        <begin position="32"/>
        <end position="49"/>
    </location>
</feature>
<feature type="helix" evidence="11">
    <location>
        <begin position="55"/>
        <end position="57"/>
    </location>
</feature>
<feature type="helix" evidence="11">
    <location>
        <begin position="68"/>
        <end position="72"/>
    </location>
</feature>
<feature type="helix" evidence="11">
    <location>
        <begin position="78"/>
        <end position="99"/>
    </location>
</feature>
<feature type="helix" evidence="11">
    <location>
        <begin position="103"/>
        <end position="115"/>
    </location>
</feature>
<feature type="helix" evidence="11">
    <location>
        <begin position="129"/>
        <end position="148"/>
    </location>
</feature>
<feature type="helix" evidence="11">
    <location>
        <begin position="150"/>
        <end position="162"/>
    </location>
</feature>
<feature type="turn" evidence="11">
    <location>
        <begin position="163"/>
        <end position="169"/>
    </location>
</feature>
<feature type="strand" evidence="11">
    <location>
        <begin position="171"/>
        <end position="173"/>
    </location>
</feature>
<feature type="helix" evidence="11">
    <location>
        <begin position="180"/>
        <end position="191"/>
    </location>
</feature>
<feature type="helix" evidence="11">
    <location>
        <begin position="193"/>
        <end position="203"/>
    </location>
</feature>
<feature type="helix" evidence="11">
    <location>
        <begin position="210"/>
        <end position="246"/>
    </location>
</feature>
<feature type="helix" evidence="11">
    <location>
        <begin position="253"/>
        <end position="260"/>
    </location>
</feature>
<feature type="helix" evidence="11">
    <location>
        <begin position="265"/>
        <end position="293"/>
    </location>
</feature>
<feature type="helix" evidence="11">
    <location>
        <begin position="299"/>
        <end position="319"/>
    </location>
</feature>
<feature type="helix" evidence="11">
    <location>
        <begin position="323"/>
        <end position="326"/>
    </location>
</feature>
<keyword id="KW-0002">3D-structure</keyword>
<keyword id="KW-0414">Isoprene biosynthesis</keyword>
<keyword id="KW-0456">Lyase</keyword>
<keyword id="KW-0460">Magnesium</keyword>
<keyword id="KW-0479">Metal-binding</keyword>
<keyword id="KW-0511">Multifunctional enzyme</keyword>
<keyword id="KW-1185">Reference proteome</keyword>
<keyword id="KW-0677">Repeat</keyword>
<keyword id="KW-0808">Transferase</keyword>
<dbReference type="EC" id="4.2.3.176" evidence="6 7"/>
<dbReference type="EC" id="2.5.1.29" evidence="6"/>
<dbReference type="EC" id="2.5.1.81" evidence="6"/>
<dbReference type="EMBL" id="DS027698">
    <property type="protein sequence ID" value="EAW16201.1"/>
    <property type="molecule type" value="Genomic_DNA"/>
</dbReference>
<dbReference type="RefSeq" id="XP_001258098.1">
    <property type="nucleotide sequence ID" value="XM_001258097.1"/>
</dbReference>
<dbReference type="PDB" id="8YLA">
    <property type="method" value="X-ray"/>
    <property type="resolution" value="1.30 A"/>
    <property type="chains" value="A/B=1-339"/>
</dbReference>
<dbReference type="PDBsum" id="8YLA"/>
<dbReference type="SMR" id="A1DN30"/>
<dbReference type="STRING" id="331117.A1DN30"/>
<dbReference type="EnsemblFungi" id="EAW16201">
    <property type="protein sequence ID" value="EAW16201"/>
    <property type="gene ID" value="NFIA_055500"/>
</dbReference>
<dbReference type="GeneID" id="4584613"/>
<dbReference type="KEGG" id="nfi:NFIA_055500"/>
<dbReference type="VEuPathDB" id="FungiDB:NFIA_055500"/>
<dbReference type="eggNOG" id="KOG0777">
    <property type="taxonomic scope" value="Eukaryota"/>
</dbReference>
<dbReference type="HOGENOM" id="CLU_014015_10_0_1"/>
<dbReference type="OMA" id="FSWEREY"/>
<dbReference type="OrthoDB" id="6921389at2759"/>
<dbReference type="UniPathway" id="UPA00213"/>
<dbReference type="Proteomes" id="UP000006702">
    <property type="component" value="Unassembled WGS sequence"/>
</dbReference>
<dbReference type="GO" id="GO:0016829">
    <property type="term" value="F:lyase activity"/>
    <property type="evidence" value="ECO:0007669"/>
    <property type="project" value="UniProtKB-KW"/>
</dbReference>
<dbReference type="GO" id="GO:0046872">
    <property type="term" value="F:metal ion binding"/>
    <property type="evidence" value="ECO:0007669"/>
    <property type="project" value="UniProtKB-KW"/>
</dbReference>
<dbReference type="GO" id="GO:0004659">
    <property type="term" value="F:prenyltransferase activity"/>
    <property type="evidence" value="ECO:0007669"/>
    <property type="project" value="InterPro"/>
</dbReference>
<dbReference type="GO" id="GO:0046165">
    <property type="term" value="P:alcohol biosynthetic process"/>
    <property type="evidence" value="ECO:0007669"/>
    <property type="project" value="UniProtKB-ARBA"/>
</dbReference>
<dbReference type="GO" id="GO:0043386">
    <property type="term" value="P:mycotoxin biosynthetic process"/>
    <property type="evidence" value="ECO:0007669"/>
    <property type="project" value="UniProtKB-ARBA"/>
</dbReference>
<dbReference type="GO" id="GO:0016114">
    <property type="term" value="P:terpenoid biosynthetic process"/>
    <property type="evidence" value="ECO:0007669"/>
    <property type="project" value="UniProtKB-UniPathway"/>
</dbReference>
<dbReference type="Gene3D" id="1.10.600.10">
    <property type="entry name" value="Farnesyl Diphosphate Synthase"/>
    <property type="match status" value="2"/>
</dbReference>
<dbReference type="InterPro" id="IPR008949">
    <property type="entry name" value="Isoprenoid_synthase_dom_sf"/>
</dbReference>
<dbReference type="InterPro" id="IPR000092">
    <property type="entry name" value="Polyprenyl_synt"/>
</dbReference>
<dbReference type="InterPro" id="IPR033749">
    <property type="entry name" value="Polyprenyl_synt_CS"/>
</dbReference>
<dbReference type="PANTHER" id="PTHR12001">
    <property type="entry name" value="GERANYLGERANYL PYROPHOSPHATE SYNTHASE"/>
    <property type="match status" value="1"/>
</dbReference>
<dbReference type="PANTHER" id="PTHR12001:SF72">
    <property type="entry name" value="THIJ_PFPI FAMILY PROTEIN (AFU_ORTHOLOGUE AFUA_3G01210)-RELATED"/>
    <property type="match status" value="1"/>
</dbReference>
<dbReference type="Pfam" id="PF00348">
    <property type="entry name" value="polyprenyl_synt"/>
    <property type="match status" value="1"/>
</dbReference>
<dbReference type="Pfam" id="PF19086">
    <property type="entry name" value="Terpene_syn_C_2"/>
    <property type="match status" value="1"/>
</dbReference>
<dbReference type="SFLD" id="SFLDS00005">
    <property type="entry name" value="Isoprenoid_Synthase_Type_I"/>
    <property type="match status" value="1"/>
</dbReference>
<dbReference type="SUPFAM" id="SSF48576">
    <property type="entry name" value="Terpenoid synthases"/>
    <property type="match status" value="2"/>
</dbReference>
<dbReference type="PROSITE" id="PS00723">
    <property type="entry name" value="POLYPRENYL_SYNTHASE_1"/>
    <property type="match status" value="1"/>
</dbReference>
<dbReference type="PROSITE" id="PS00444">
    <property type="entry name" value="POLYPRENYL_SYNTHASE_2"/>
    <property type="match status" value="1"/>
</dbReference>
<gene>
    <name evidence="8" type="primary">NfSS</name>
    <name type="ORF">NFIA_055500</name>
</gene>
<organism>
    <name type="scientific">Neosartorya fischeri (strain ATCC 1020 / DSM 3700 / CBS 544.65 / FGSC A1164 / JCM 1740 / NRRL 181 / WB 181)</name>
    <name type="common">Aspergillus fischerianus</name>
    <dbReference type="NCBI Taxonomy" id="331117"/>
    <lineage>
        <taxon>Eukaryota</taxon>
        <taxon>Fungi</taxon>
        <taxon>Dikarya</taxon>
        <taxon>Ascomycota</taxon>
        <taxon>Pezizomycotina</taxon>
        <taxon>Eurotiomycetes</taxon>
        <taxon>Eurotiomycetidae</taxon>
        <taxon>Eurotiales</taxon>
        <taxon>Aspergillaceae</taxon>
        <taxon>Aspergillus</taxon>
        <taxon>Aspergillus subgen. Fumigati</taxon>
    </lineage>
</organism>
<comment type="function">
    <text evidence="6 7">Bifunctional terpene synthase; part of the gene cluster that mediates the biosynthesis of sesterfisheric acid (PubMed:26332841). The bifunctional terpene synthase NfSS converts dimethylallyl diphosphate (DMAPP) and isopentenyl diphosphate (IPP) into sesterfisherol (PubMed:26332841, PubMed:29410538). The C-terminal prenyltransferase (PT) domain of NfSS catalyzes formation of geranylfarnesyl pyrophosphate (GFPP), whereas the N-terminal terpene cyclase (TC) domain catalyzes the cyclization of GFPP to sesterfisherol (PubMed:26332841, PubMed:29410538). The cytochrome P450 monooxygenase NfP450 then catalyzes oxidative modifications of sesterfisherol into sesterfisheric acid (PubMed:26332841).</text>
</comment>
<comment type="catalytic activity">
    <reaction evidence="6">
        <text>isopentenyl diphosphate + (2E,6E)-farnesyl diphosphate = (2E,6E,10E)-geranylgeranyl diphosphate + diphosphate</text>
        <dbReference type="Rhea" id="RHEA:17653"/>
        <dbReference type="ChEBI" id="CHEBI:33019"/>
        <dbReference type="ChEBI" id="CHEBI:58756"/>
        <dbReference type="ChEBI" id="CHEBI:128769"/>
        <dbReference type="ChEBI" id="CHEBI:175763"/>
        <dbReference type="EC" id="2.5.1.29"/>
    </reaction>
    <physiologicalReaction direction="left-to-right" evidence="6">
        <dbReference type="Rhea" id="RHEA:17654"/>
    </physiologicalReaction>
</comment>
<comment type="catalytic activity">
    <reaction evidence="6">
        <text>isopentenyl diphosphate + (2E,6E,10E)-geranylgeranyl diphosphate = (2E,6E,10E,14E)-geranylfarnesyl diphosphate + diphosphate</text>
        <dbReference type="Rhea" id="RHEA:25694"/>
        <dbReference type="ChEBI" id="CHEBI:33019"/>
        <dbReference type="ChEBI" id="CHEBI:57907"/>
        <dbReference type="ChEBI" id="CHEBI:58756"/>
        <dbReference type="ChEBI" id="CHEBI:128769"/>
        <dbReference type="EC" id="2.5.1.81"/>
    </reaction>
    <physiologicalReaction direction="left-to-right" evidence="6">
        <dbReference type="Rhea" id="RHEA:25695"/>
    </physiologicalReaction>
</comment>
<comment type="catalytic activity">
    <reaction evidence="6 7">
        <text>(2E,6E,10E,14E)-geranylfarnesyl diphosphate + H2O = sesterfisherol + diphosphate</text>
        <dbReference type="Rhea" id="RHEA:54068"/>
        <dbReference type="ChEBI" id="CHEBI:15377"/>
        <dbReference type="ChEBI" id="CHEBI:33019"/>
        <dbReference type="ChEBI" id="CHEBI:57907"/>
        <dbReference type="ChEBI" id="CHEBI:138046"/>
        <dbReference type="EC" id="4.2.3.176"/>
    </reaction>
    <physiologicalReaction direction="left-to-right" evidence="6">
        <dbReference type="Rhea" id="RHEA:54069"/>
    </physiologicalReaction>
</comment>
<comment type="cofactor">
    <cofactor evidence="2">
        <name>Mg(2+)</name>
        <dbReference type="ChEBI" id="CHEBI:18420"/>
    </cofactor>
</comment>
<comment type="pathway">
    <text evidence="6">Secondary metabolite biosynthesis; terpenoid biosynthesis.</text>
</comment>
<comment type="subunit">
    <text evidence="1">Hexamer.</text>
</comment>
<comment type="domain">
    <text evidence="10">The conserved DDXXD motifs as well as the NSE/DTE motif are important for the catalytic activity, presumably through binding to Mg(2+).</text>
</comment>
<comment type="similarity">
    <text evidence="9">In the N-terminal section; belongs to the terpene synthase family.</text>
</comment>
<comment type="similarity">
    <text evidence="9">In the C-terminal section; belongs to the FPP/GGPP synthase family.</text>
</comment>
<reference key="1">
    <citation type="journal article" date="2008" name="PLoS Genet.">
        <title>Genomic islands in the pathogenic filamentous fungus Aspergillus fumigatus.</title>
        <authorList>
            <person name="Fedorova N.D."/>
            <person name="Khaldi N."/>
            <person name="Joardar V.S."/>
            <person name="Maiti R."/>
            <person name="Amedeo P."/>
            <person name="Anderson M.J."/>
            <person name="Crabtree J."/>
            <person name="Silva J.C."/>
            <person name="Badger J.H."/>
            <person name="Albarraq A."/>
            <person name="Angiuoli S."/>
            <person name="Bussey H."/>
            <person name="Bowyer P."/>
            <person name="Cotty P.J."/>
            <person name="Dyer P.S."/>
            <person name="Egan A."/>
            <person name="Galens K."/>
            <person name="Fraser-Liggett C.M."/>
            <person name="Haas B.J."/>
            <person name="Inman J.M."/>
            <person name="Kent R."/>
            <person name="Lemieux S."/>
            <person name="Malavazi I."/>
            <person name="Orvis J."/>
            <person name="Roemer T."/>
            <person name="Ronning C.M."/>
            <person name="Sundaram J.P."/>
            <person name="Sutton G."/>
            <person name="Turner G."/>
            <person name="Venter J.C."/>
            <person name="White O.R."/>
            <person name="Whitty B.R."/>
            <person name="Youngman P."/>
            <person name="Wolfe K.H."/>
            <person name="Goldman G.H."/>
            <person name="Wortman J.R."/>
            <person name="Jiang B."/>
            <person name="Denning D.W."/>
            <person name="Nierman W.C."/>
        </authorList>
    </citation>
    <scope>NUCLEOTIDE SEQUENCE [LARGE SCALE GENOMIC DNA]</scope>
    <source>
        <strain>ATCC 1020 / DSM 3700 / CBS 544.65 / FGSC A1164 / JCM 1740 / NRRL 181 / WB 181</strain>
    </source>
</reference>
<reference key="2">
    <citation type="journal article" date="2015" name="J. Am. Chem. Soc.">
        <title>Genome mining for sesterterpenes using bifunctional terpene synthases reveals a unified intermediate of di/sesterterpenes.</title>
        <authorList>
            <person name="Ye Y."/>
            <person name="Minami A."/>
            <person name="Mandi A."/>
            <person name="Liu C."/>
            <person name="Taniguchi T."/>
            <person name="Kuzuyama T."/>
            <person name="Monde K."/>
            <person name="Gomi K."/>
            <person name="Oikawa H."/>
        </authorList>
    </citation>
    <scope>FUNCTION</scope>
    <scope>DOMAIN</scope>
    <scope>CATALYTIC ACTIVITY</scope>
    <scope>PATHWAY</scope>
</reference>
<reference key="3">
    <citation type="journal article" date="2018" name="Sci. Rep.">
        <title>Theoretical Study of Sesterfisherol Biosynthesis: Computational Prediction of Key Amino Acid Residue in Terpene Synthase.</title>
        <authorList>
            <person name="Sato H."/>
            <person name="Narita K."/>
            <person name="Minami A."/>
            <person name="Yamazaki M."/>
            <person name="Wang C."/>
            <person name="Suemune H."/>
            <person name="Nagano S."/>
            <person name="Tomita T."/>
            <person name="Oikawa H."/>
            <person name="Uchiyama M."/>
        </authorList>
    </citation>
    <scope>FUNCTION</scope>
    <scope>CATALYTIC ACTIVITY</scope>
    <scope>MUTAGENESIS OF PHE-191</scope>
</reference>
<evidence type="ECO:0000250" key="1">
    <source>
        <dbReference type="UniProtKB" id="A2PZA5"/>
    </source>
</evidence>
<evidence type="ECO:0000250" key="2">
    <source>
        <dbReference type="UniProtKB" id="P9WEV7"/>
    </source>
</evidence>
<evidence type="ECO:0000250" key="3">
    <source>
        <dbReference type="UniProtKB" id="Q12051"/>
    </source>
</evidence>
<evidence type="ECO:0000250" key="4">
    <source>
        <dbReference type="UniProtKB" id="Q40577"/>
    </source>
</evidence>
<evidence type="ECO:0000256" key="5">
    <source>
        <dbReference type="SAM" id="MobiDB-lite"/>
    </source>
</evidence>
<evidence type="ECO:0000269" key="6">
    <source>
    </source>
</evidence>
<evidence type="ECO:0000269" key="7">
    <source>
    </source>
</evidence>
<evidence type="ECO:0000303" key="8">
    <source>
    </source>
</evidence>
<evidence type="ECO:0000305" key="9"/>
<evidence type="ECO:0000305" key="10">
    <source>
    </source>
</evidence>
<evidence type="ECO:0007829" key="11">
    <source>
        <dbReference type="PDB" id="8YLA"/>
    </source>
</evidence>
<protein>
    <recommendedName>
        <fullName evidence="8">Sesterfisherol synthase</fullName>
        <shortName evidence="8">SS</shortName>
    </recommendedName>
    <alternativeName>
        <fullName evidence="8">Sesterfisheric acid biosynthesis cluster protein NfSS</fullName>
    </alternativeName>
    <domain>
        <recommendedName>
            <fullName evidence="8">Terpene cyclase</fullName>
            <ecNumber evidence="6 7">4.2.3.176</ecNumber>
        </recommendedName>
    </domain>
    <domain>
        <recommendedName>
            <fullName evidence="8">Geranylgeranyl diphosphate synthase</fullName>
            <shortName evidence="8">GGDP synthase</shortName>
            <shortName evidence="8">GGS</shortName>
            <ecNumber evidence="6">2.5.1.29</ecNumber>
        </recommendedName>
    </domain>
    <domain>
        <recommendedName>
            <fullName>Geranylfarnesyl diphosphate synthase</fullName>
            <shortName evidence="8">GFDP synthase</shortName>
            <ecNumber evidence="6">2.5.1.81</ecNumber>
        </recommendedName>
    </domain>
</protein>
<proteinExistence type="evidence at protein level"/>
<accession>A1DN30</accession>